<keyword id="KW-0028">Amino-acid biosynthesis</keyword>
<keyword id="KW-0057">Aromatic amino acid biosynthesis</keyword>
<keyword id="KW-0521">NADP</keyword>
<keyword id="KW-0560">Oxidoreductase</keyword>
<accession>A6UEF5</accession>
<organism>
    <name type="scientific">Sinorhizobium medicae (strain WSM419)</name>
    <name type="common">Ensifer medicae</name>
    <dbReference type="NCBI Taxonomy" id="366394"/>
    <lineage>
        <taxon>Bacteria</taxon>
        <taxon>Pseudomonadati</taxon>
        <taxon>Pseudomonadota</taxon>
        <taxon>Alphaproteobacteria</taxon>
        <taxon>Hyphomicrobiales</taxon>
        <taxon>Rhizobiaceae</taxon>
        <taxon>Sinorhizobium/Ensifer group</taxon>
        <taxon>Sinorhizobium</taxon>
    </lineage>
</organism>
<proteinExistence type="inferred from homology"/>
<name>AROE_SINMW</name>
<evidence type="ECO:0000255" key="1">
    <source>
        <dbReference type="HAMAP-Rule" id="MF_00222"/>
    </source>
</evidence>
<sequence>MRDSRETFVNHAFVAGYPVKHSRSPLIHGYWLKRFGIQGSYRAHEVTSDAFPDFMRQIKEGTAGFCGGNVTIPHKEAAFRLSDRPDELSAELGAANTLWLENGTIRATNTDGRGFVANLDERAKGWDRISAAVILGAGGASRAVIQAIRDRGVKAIHVVNRTPERARELADRFGSAVHAHSMAALPEVLSGAGLFVNTTSLGMDGEPAPAIDFSKLARDAVVTDIVYVPLKTPLLRQAEEQGFRVVDGLGMLLHQAAPGFEKWFGLRPVVDEALREIIISDMDKHA</sequence>
<dbReference type="EC" id="1.1.1.25" evidence="1"/>
<dbReference type="EMBL" id="CP000738">
    <property type="protein sequence ID" value="ABR62035.1"/>
    <property type="molecule type" value="Genomic_DNA"/>
</dbReference>
<dbReference type="RefSeq" id="WP_012067416.1">
    <property type="nucleotide sequence ID" value="NC_009636.1"/>
</dbReference>
<dbReference type="RefSeq" id="YP_001328870.1">
    <property type="nucleotide sequence ID" value="NC_009636.1"/>
</dbReference>
<dbReference type="SMR" id="A6UEF5"/>
<dbReference type="STRING" id="366394.Smed_3211"/>
<dbReference type="KEGG" id="smd:Smed_3211"/>
<dbReference type="PATRIC" id="fig|366394.8.peg.6449"/>
<dbReference type="eggNOG" id="COG0169">
    <property type="taxonomic scope" value="Bacteria"/>
</dbReference>
<dbReference type="HOGENOM" id="CLU_044063_2_0_5"/>
<dbReference type="OrthoDB" id="9792692at2"/>
<dbReference type="UniPathway" id="UPA00053">
    <property type="reaction ID" value="UER00087"/>
</dbReference>
<dbReference type="Proteomes" id="UP000001108">
    <property type="component" value="Chromosome"/>
</dbReference>
<dbReference type="GO" id="GO:0005829">
    <property type="term" value="C:cytosol"/>
    <property type="evidence" value="ECO:0007669"/>
    <property type="project" value="TreeGrafter"/>
</dbReference>
<dbReference type="GO" id="GO:0050661">
    <property type="term" value="F:NADP binding"/>
    <property type="evidence" value="ECO:0007669"/>
    <property type="project" value="InterPro"/>
</dbReference>
<dbReference type="GO" id="GO:0004764">
    <property type="term" value="F:shikimate 3-dehydrogenase (NADP+) activity"/>
    <property type="evidence" value="ECO:0007669"/>
    <property type="project" value="UniProtKB-UniRule"/>
</dbReference>
<dbReference type="GO" id="GO:0008652">
    <property type="term" value="P:amino acid biosynthetic process"/>
    <property type="evidence" value="ECO:0007669"/>
    <property type="project" value="UniProtKB-KW"/>
</dbReference>
<dbReference type="GO" id="GO:0009073">
    <property type="term" value="P:aromatic amino acid family biosynthetic process"/>
    <property type="evidence" value="ECO:0007669"/>
    <property type="project" value="UniProtKB-KW"/>
</dbReference>
<dbReference type="GO" id="GO:0009423">
    <property type="term" value="P:chorismate biosynthetic process"/>
    <property type="evidence" value="ECO:0007669"/>
    <property type="project" value="UniProtKB-UniRule"/>
</dbReference>
<dbReference type="GO" id="GO:0019632">
    <property type="term" value="P:shikimate metabolic process"/>
    <property type="evidence" value="ECO:0007669"/>
    <property type="project" value="InterPro"/>
</dbReference>
<dbReference type="CDD" id="cd01065">
    <property type="entry name" value="NAD_bind_Shikimate_DH"/>
    <property type="match status" value="1"/>
</dbReference>
<dbReference type="Gene3D" id="3.40.50.10860">
    <property type="entry name" value="Leucine Dehydrogenase, chain A, domain 1"/>
    <property type="match status" value="1"/>
</dbReference>
<dbReference type="Gene3D" id="3.40.50.720">
    <property type="entry name" value="NAD(P)-binding Rossmann-like Domain"/>
    <property type="match status" value="1"/>
</dbReference>
<dbReference type="HAMAP" id="MF_00222">
    <property type="entry name" value="Shikimate_DH_AroE"/>
    <property type="match status" value="1"/>
</dbReference>
<dbReference type="InterPro" id="IPR046346">
    <property type="entry name" value="Aminoacid_DH-like_N_sf"/>
</dbReference>
<dbReference type="InterPro" id="IPR036291">
    <property type="entry name" value="NAD(P)-bd_dom_sf"/>
</dbReference>
<dbReference type="InterPro" id="IPR041121">
    <property type="entry name" value="SDH_C"/>
</dbReference>
<dbReference type="InterPro" id="IPR011342">
    <property type="entry name" value="Shikimate_DH"/>
</dbReference>
<dbReference type="InterPro" id="IPR013708">
    <property type="entry name" value="Shikimate_DH-bd_N"/>
</dbReference>
<dbReference type="InterPro" id="IPR022893">
    <property type="entry name" value="Shikimate_DH_fam"/>
</dbReference>
<dbReference type="InterPro" id="IPR006151">
    <property type="entry name" value="Shikm_DH/Glu-tRNA_Rdtase"/>
</dbReference>
<dbReference type="NCBIfam" id="TIGR00507">
    <property type="entry name" value="aroE"/>
    <property type="match status" value="1"/>
</dbReference>
<dbReference type="NCBIfam" id="NF001312">
    <property type="entry name" value="PRK00258.1-4"/>
    <property type="match status" value="1"/>
</dbReference>
<dbReference type="PANTHER" id="PTHR21089:SF1">
    <property type="entry name" value="BIFUNCTIONAL 3-DEHYDROQUINATE DEHYDRATASE_SHIKIMATE DEHYDROGENASE, CHLOROPLASTIC"/>
    <property type="match status" value="1"/>
</dbReference>
<dbReference type="PANTHER" id="PTHR21089">
    <property type="entry name" value="SHIKIMATE DEHYDROGENASE"/>
    <property type="match status" value="1"/>
</dbReference>
<dbReference type="Pfam" id="PF18317">
    <property type="entry name" value="SDH_C"/>
    <property type="match status" value="1"/>
</dbReference>
<dbReference type="Pfam" id="PF01488">
    <property type="entry name" value="Shikimate_DH"/>
    <property type="match status" value="1"/>
</dbReference>
<dbReference type="Pfam" id="PF08501">
    <property type="entry name" value="Shikimate_dh_N"/>
    <property type="match status" value="1"/>
</dbReference>
<dbReference type="SUPFAM" id="SSF53223">
    <property type="entry name" value="Aminoacid dehydrogenase-like, N-terminal domain"/>
    <property type="match status" value="1"/>
</dbReference>
<dbReference type="SUPFAM" id="SSF51735">
    <property type="entry name" value="NAD(P)-binding Rossmann-fold domains"/>
    <property type="match status" value="1"/>
</dbReference>
<protein>
    <recommendedName>
        <fullName evidence="1">Shikimate dehydrogenase (NADP(+))</fullName>
        <shortName evidence="1">SDH</shortName>
        <ecNumber evidence="1">1.1.1.25</ecNumber>
    </recommendedName>
</protein>
<gene>
    <name evidence="1" type="primary">aroE</name>
    <name type="ordered locus">Smed_3211</name>
</gene>
<comment type="function">
    <text evidence="1">Involved in the biosynthesis of the chorismate, which leads to the biosynthesis of aromatic amino acids. Catalyzes the reversible NADPH linked reduction of 3-dehydroshikimate (DHSA) to yield shikimate (SA).</text>
</comment>
<comment type="catalytic activity">
    <reaction evidence="1">
        <text>shikimate + NADP(+) = 3-dehydroshikimate + NADPH + H(+)</text>
        <dbReference type="Rhea" id="RHEA:17737"/>
        <dbReference type="ChEBI" id="CHEBI:15378"/>
        <dbReference type="ChEBI" id="CHEBI:16630"/>
        <dbReference type="ChEBI" id="CHEBI:36208"/>
        <dbReference type="ChEBI" id="CHEBI:57783"/>
        <dbReference type="ChEBI" id="CHEBI:58349"/>
        <dbReference type="EC" id="1.1.1.25"/>
    </reaction>
</comment>
<comment type="pathway">
    <text evidence="1">Metabolic intermediate biosynthesis; chorismate biosynthesis; chorismate from D-erythrose 4-phosphate and phosphoenolpyruvate: step 4/7.</text>
</comment>
<comment type="subunit">
    <text evidence="1">Homodimer.</text>
</comment>
<comment type="similarity">
    <text evidence="1">Belongs to the shikimate dehydrogenase family.</text>
</comment>
<reference key="1">
    <citation type="submission" date="2007-06" db="EMBL/GenBank/DDBJ databases">
        <title>Complete sequence of Sinorhizobium medicae WSM419 chromosome.</title>
        <authorList>
            <consortium name="US DOE Joint Genome Institute"/>
            <person name="Copeland A."/>
            <person name="Lucas S."/>
            <person name="Lapidus A."/>
            <person name="Barry K."/>
            <person name="Glavina del Rio T."/>
            <person name="Dalin E."/>
            <person name="Tice H."/>
            <person name="Pitluck S."/>
            <person name="Chain P."/>
            <person name="Malfatti S."/>
            <person name="Shin M."/>
            <person name="Vergez L."/>
            <person name="Schmutz J."/>
            <person name="Larimer F."/>
            <person name="Land M."/>
            <person name="Hauser L."/>
            <person name="Kyrpides N."/>
            <person name="Mikhailova N."/>
            <person name="Reeve W.G."/>
            <person name="Richardson P."/>
        </authorList>
    </citation>
    <scope>NUCLEOTIDE SEQUENCE [LARGE SCALE GENOMIC DNA]</scope>
    <source>
        <strain>WSM419</strain>
    </source>
</reference>
<feature type="chain" id="PRO_1000100142" description="Shikimate dehydrogenase (NADP(+))">
    <location>
        <begin position="1"/>
        <end position="286"/>
    </location>
</feature>
<feature type="active site" description="Proton acceptor" evidence="1">
    <location>
        <position position="75"/>
    </location>
</feature>
<feature type="binding site" evidence="1">
    <location>
        <begin position="22"/>
        <end position="24"/>
    </location>
    <ligand>
        <name>shikimate</name>
        <dbReference type="ChEBI" id="CHEBI:36208"/>
    </ligand>
</feature>
<feature type="binding site" evidence="1">
    <location>
        <position position="71"/>
    </location>
    <ligand>
        <name>shikimate</name>
        <dbReference type="ChEBI" id="CHEBI:36208"/>
    </ligand>
</feature>
<feature type="binding site" evidence="1">
    <location>
        <position position="87"/>
    </location>
    <ligand>
        <name>NADP(+)</name>
        <dbReference type="ChEBI" id="CHEBI:58349"/>
    </ligand>
</feature>
<feature type="binding site" evidence="1">
    <location>
        <position position="96"/>
    </location>
    <ligand>
        <name>shikimate</name>
        <dbReference type="ChEBI" id="CHEBI:36208"/>
    </ligand>
</feature>
<feature type="binding site" evidence="1">
    <location>
        <position position="111"/>
    </location>
    <ligand>
        <name>shikimate</name>
        <dbReference type="ChEBI" id="CHEBI:36208"/>
    </ligand>
</feature>
<feature type="binding site" evidence="1">
    <location>
        <begin position="136"/>
        <end position="140"/>
    </location>
    <ligand>
        <name>NADP(+)</name>
        <dbReference type="ChEBI" id="CHEBI:58349"/>
    </ligand>
</feature>
<feature type="binding site" evidence="1">
    <location>
        <begin position="160"/>
        <end position="165"/>
    </location>
    <ligand>
        <name>NADP(+)</name>
        <dbReference type="ChEBI" id="CHEBI:58349"/>
    </ligand>
</feature>
<feature type="binding site" evidence="1">
    <location>
        <position position="225"/>
    </location>
    <ligand>
        <name>NADP(+)</name>
        <dbReference type="ChEBI" id="CHEBI:58349"/>
    </ligand>
</feature>
<feature type="binding site" evidence="1">
    <location>
        <position position="227"/>
    </location>
    <ligand>
        <name>shikimate</name>
        <dbReference type="ChEBI" id="CHEBI:36208"/>
    </ligand>
</feature>
<feature type="binding site" evidence="1">
    <location>
        <position position="248"/>
    </location>
    <ligand>
        <name>NADP(+)</name>
        <dbReference type="ChEBI" id="CHEBI:58349"/>
    </ligand>
</feature>